<organism>
    <name type="scientific">Vibrio campbellii (strain ATCC BAA-1116)</name>
    <dbReference type="NCBI Taxonomy" id="2902295"/>
    <lineage>
        <taxon>Bacteria</taxon>
        <taxon>Pseudomonadati</taxon>
        <taxon>Pseudomonadota</taxon>
        <taxon>Gammaproteobacteria</taxon>
        <taxon>Vibrionales</taxon>
        <taxon>Vibrionaceae</taxon>
        <taxon>Vibrio</taxon>
    </lineage>
</organism>
<comment type="function">
    <text evidence="1">Binds the 23S rRNA.</text>
</comment>
<comment type="cofactor">
    <cofactor evidence="1">
        <name>Zn(2+)</name>
        <dbReference type="ChEBI" id="CHEBI:29105"/>
    </cofactor>
    <text evidence="1">Binds 1 zinc ion per subunit.</text>
</comment>
<comment type="subunit">
    <text evidence="1">Part of the 50S ribosomal subunit.</text>
</comment>
<comment type="similarity">
    <text evidence="1">Belongs to the bacterial ribosomal protein bL31 family. Type A subfamily.</text>
</comment>
<proteinExistence type="inferred from homology"/>
<feature type="chain" id="PRO_1000126766" description="Large ribosomal subunit protein bL31">
    <location>
        <begin position="1"/>
        <end position="72"/>
    </location>
</feature>
<feature type="binding site" evidence="1">
    <location>
        <position position="16"/>
    </location>
    <ligand>
        <name>Zn(2+)</name>
        <dbReference type="ChEBI" id="CHEBI:29105"/>
    </ligand>
</feature>
<feature type="binding site" evidence="1">
    <location>
        <position position="18"/>
    </location>
    <ligand>
        <name>Zn(2+)</name>
        <dbReference type="ChEBI" id="CHEBI:29105"/>
    </ligand>
</feature>
<feature type="binding site" evidence="1">
    <location>
        <position position="38"/>
    </location>
    <ligand>
        <name>Zn(2+)</name>
        <dbReference type="ChEBI" id="CHEBI:29105"/>
    </ligand>
</feature>
<feature type="binding site" evidence="1">
    <location>
        <position position="41"/>
    </location>
    <ligand>
        <name>Zn(2+)</name>
        <dbReference type="ChEBI" id="CHEBI:29105"/>
    </ligand>
</feature>
<sequence length="72" mass="8043">MKAGIHPEYKAVSATCSCGNSFEFKSTLDKESIHLDVCDKCHPFYTGKQRIVDTGGRVDRFNKRFGALSSKK</sequence>
<protein>
    <recommendedName>
        <fullName evidence="1">Large ribosomal subunit protein bL31</fullName>
    </recommendedName>
    <alternativeName>
        <fullName evidence="2">50S ribosomal protein L31</fullName>
    </alternativeName>
</protein>
<keyword id="KW-0479">Metal-binding</keyword>
<keyword id="KW-0687">Ribonucleoprotein</keyword>
<keyword id="KW-0689">Ribosomal protein</keyword>
<keyword id="KW-0694">RNA-binding</keyword>
<keyword id="KW-0699">rRNA-binding</keyword>
<keyword id="KW-0862">Zinc</keyword>
<gene>
    <name evidence="1" type="primary">rpmE</name>
    <name type="ordered locus">VIBHAR_00728</name>
</gene>
<evidence type="ECO:0000255" key="1">
    <source>
        <dbReference type="HAMAP-Rule" id="MF_00501"/>
    </source>
</evidence>
<evidence type="ECO:0000305" key="2"/>
<dbReference type="EMBL" id="CP000789">
    <property type="protein sequence ID" value="ABU69729.1"/>
    <property type="molecule type" value="Genomic_DNA"/>
</dbReference>
<dbReference type="RefSeq" id="WP_005429947.1">
    <property type="nucleotide sequence ID" value="NC_022269.1"/>
</dbReference>
<dbReference type="SMR" id="A7MWI1"/>
<dbReference type="KEGG" id="vha:VIBHAR_00728"/>
<dbReference type="PATRIC" id="fig|338187.25.peg.1886"/>
<dbReference type="Proteomes" id="UP000008152">
    <property type="component" value="Chromosome I"/>
</dbReference>
<dbReference type="GO" id="GO:1990904">
    <property type="term" value="C:ribonucleoprotein complex"/>
    <property type="evidence" value="ECO:0007669"/>
    <property type="project" value="UniProtKB-KW"/>
</dbReference>
<dbReference type="GO" id="GO:0005840">
    <property type="term" value="C:ribosome"/>
    <property type="evidence" value="ECO:0007669"/>
    <property type="project" value="UniProtKB-KW"/>
</dbReference>
<dbReference type="GO" id="GO:0046872">
    <property type="term" value="F:metal ion binding"/>
    <property type="evidence" value="ECO:0007669"/>
    <property type="project" value="UniProtKB-KW"/>
</dbReference>
<dbReference type="GO" id="GO:0019843">
    <property type="term" value="F:rRNA binding"/>
    <property type="evidence" value="ECO:0007669"/>
    <property type="project" value="UniProtKB-KW"/>
</dbReference>
<dbReference type="GO" id="GO:0003735">
    <property type="term" value="F:structural constituent of ribosome"/>
    <property type="evidence" value="ECO:0007669"/>
    <property type="project" value="InterPro"/>
</dbReference>
<dbReference type="GO" id="GO:0006412">
    <property type="term" value="P:translation"/>
    <property type="evidence" value="ECO:0007669"/>
    <property type="project" value="UniProtKB-UniRule"/>
</dbReference>
<dbReference type="Gene3D" id="4.10.830.30">
    <property type="entry name" value="Ribosomal protein L31"/>
    <property type="match status" value="1"/>
</dbReference>
<dbReference type="HAMAP" id="MF_00501">
    <property type="entry name" value="Ribosomal_bL31_1"/>
    <property type="match status" value="1"/>
</dbReference>
<dbReference type="InterPro" id="IPR034704">
    <property type="entry name" value="Ribosomal_bL28/bL31-like_sf"/>
</dbReference>
<dbReference type="InterPro" id="IPR002150">
    <property type="entry name" value="Ribosomal_bL31"/>
</dbReference>
<dbReference type="InterPro" id="IPR027491">
    <property type="entry name" value="Ribosomal_bL31_A"/>
</dbReference>
<dbReference type="InterPro" id="IPR042105">
    <property type="entry name" value="Ribosomal_bL31_sf"/>
</dbReference>
<dbReference type="NCBIfam" id="TIGR00105">
    <property type="entry name" value="L31"/>
    <property type="match status" value="1"/>
</dbReference>
<dbReference type="NCBIfam" id="NF000612">
    <property type="entry name" value="PRK00019.1"/>
    <property type="match status" value="1"/>
</dbReference>
<dbReference type="NCBIfam" id="NF001809">
    <property type="entry name" value="PRK00528.1"/>
    <property type="match status" value="1"/>
</dbReference>
<dbReference type="PANTHER" id="PTHR33280">
    <property type="entry name" value="50S RIBOSOMAL PROTEIN L31, CHLOROPLASTIC"/>
    <property type="match status" value="1"/>
</dbReference>
<dbReference type="PANTHER" id="PTHR33280:SF6">
    <property type="entry name" value="LARGE RIBOSOMAL SUBUNIT PROTEIN BL31A"/>
    <property type="match status" value="1"/>
</dbReference>
<dbReference type="Pfam" id="PF01197">
    <property type="entry name" value="Ribosomal_L31"/>
    <property type="match status" value="1"/>
</dbReference>
<dbReference type="PRINTS" id="PR01249">
    <property type="entry name" value="RIBOSOMALL31"/>
</dbReference>
<dbReference type="SUPFAM" id="SSF143800">
    <property type="entry name" value="L28p-like"/>
    <property type="match status" value="1"/>
</dbReference>
<dbReference type="PROSITE" id="PS01143">
    <property type="entry name" value="RIBOSOMAL_L31"/>
    <property type="match status" value="1"/>
</dbReference>
<name>RL31_VIBC1</name>
<accession>A7MWI1</accession>
<reference key="1">
    <citation type="submission" date="2007-08" db="EMBL/GenBank/DDBJ databases">
        <authorList>
            <consortium name="The Vibrio harveyi Genome Sequencing Project"/>
            <person name="Bassler B."/>
            <person name="Clifton S.W."/>
            <person name="Fulton L."/>
            <person name="Delehaunty K."/>
            <person name="Fronick C."/>
            <person name="Harrison M."/>
            <person name="Markivic C."/>
            <person name="Fulton R."/>
            <person name="Tin-Wollam A.-M."/>
            <person name="Shah N."/>
            <person name="Pepin K."/>
            <person name="Nash W."/>
            <person name="Thiruvilangam P."/>
            <person name="Bhonagiri V."/>
            <person name="Waters C."/>
            <person name="Tu K.C."/>
            <person name="Irgon J."/>
            <person name="Wilson R.K."/>
        </authorList>
    </citation>
    <scope>NUCLEOTIDE SEQUENCE [LARGE SCALE GENOMIC DNA]</scope>
    <source>
        <strain>ATCC BAA-1116 / BB120</strain>
    </source>
</reference>